<accession>Q2RJT7</accession>
<keyword id="KW-1003">Cell membrane</keyword>
<keyword id="KW-0472">Membrane</keyword>
<keyword id="KW-0520">NAD</keyword>
<keyword id="KW-0874">Quinone</keyword>
<keyword id="KW-1278">Translocase</keyword>
<keyword id="KW-0812">Transmembrane</keyword>
<keyword id="KW-1133">Transmembrane helix</keyword>
<keyword id="KW-0813">Transport</keyword>
<reference key="1">
    <citation type="journal article" date="2008" name="Environ. Microbiol.">
        <title>The complete genome sequence of Moorella thermoacetica (f. Clostridium thermoaceticum).</title>
        <authorList>
            <person name="Pierce E."/>
            <person name="Xie G."/>
            <person name="Barabote R.D."/>
            <person name="Saunders E."/>
            <person name="Han C.S."/>
            <person name="Detter J.C."/>
            <person name="Richardson P."/>
            <person name="Brettin T.S."/>
            <person name="Das A."/>
            <person name="Ljungdahl L.G."/>
            <person name="Ragsdale S.W."/>
        </authorList>
    </citation>
    <scope>NUCLEOTIDE SEQUENCE [LARGE SCALE GENOMIC DNA]</scope>
    <source>
        <strain>ATCC 39073 / JCM 9320</strain>
    </source>
</reference>
<sequence>MANLHLLTVEILTAALGLGLLALGLLVPHSDRRGIAYVATAGLAGILAAAFGMREASGVVLGGYVIDPFGTYFKILFLVAAMLTAACSYDYVEKMGLNQGEYYALLVLATLGMMVLASSGELVSLYLGLELMTITFCILAAFHLGDAKSAEAGIKYVLLGAMSSAIFLYGLSLVYGSSGTTVIREIGQAVATRGASPALLLGTIFILAGFAFKVTAVPFHMWSPDVYEGAPTPVTGFLSVASKAAAFAALVRVFFGALPDLHSFWVQLFIALAVLTIVLGNLVAIPQTNIKRLLAYSSIAQAGYLLLGIVSFSVLGVGAVMYYAMLYVFGNMGAFMAATAFYNNDGSDEIKDYAGLARRSPLVAALMLFSLLSLAGIPPMAGFVGKFYLFMSIISRQYIWLAILGILMSMVSVYYYLLVAKAMYLGNPPEGSKPLRVAPGLQVAMVVSLLILFILGIYPTPLTNYAMNSAVTFFMP</sequence>
<feature type="chain" id="PRO_0000391181" description="NADH-quinone oxidoreductase subunit N">
    <location>
        <begin position="1"/>
        <end position="476"/>
    </location>
</feature>
<feature type="transmembrane region" description="Helical" evidence="1">
    <location>
        <begin position="7"/>
        <end position="27"/>
    </location>
</feature>
<feature type="transmembrane region" description="Helical" evidence="1">
    <location>
        <begin position="33"/>
        <end position="53"/>
    </location>
</feature>
<feature type="transmembrane region" description="Helical" evidence="1">
    <location>
        <begin position="59"/>
        <end position="79"/>
    </location>
</feature>
<feature type="transmembrane region" description="Helical" evidence="1">
    <location>
        <begin position="100"/>
        <end position="120"/>
    </location>
</feature>
<feature type="transmembrane region" description="Helical" evidence="1">
    <location>
        <begin position="122"/>
        <end position="142"/>
    </location>
</feature>
<feature type="transmembrane region" description="Helical" evidence="1">
    <location>
        <begin position="156"/>
        <end position="176"/>
    </location>
</feature>
<feature type="transmembrane region" description="Helical" evidence="1">
    <location>
        <begin position="199"/>
        <end position="219"/>
    </location>
</feature>
<feature type="transmembrane region" description="Helical" evidence="1">
    <location>
        <begin position="237"/>
        <end position="257"/>
    </location>
</feature>
<feature type="transmembrane region" description="Helical" evidence="1">
    <location>
        <begin position="265"/>
        <end position="285"/>
    </location>
</feature>
<feature type="transmembrane region" description="Helical" evidence="1">
    <location>
        <begin position="305"/>
        <end position="325"/>
    </location>
</feature>
<feature type="transmembrane region" description="Helical" evidence="1">
    <location>
        <begin position="363"/>
        <end position="383"/>
    </location>
</feature>
<feature type="transmembrane region" description="Helical" evidence="1">
    <location>
        <begin position="399"/>
        <end position="419"/>
    </location>
</feature>
<feature type="transmembrane region" description="Helical" evidence="1">
    <location>
        <begin position="437"/>
        <end position="457"/>
    </location>
</feature>
<protein>
    <recommendedName>
        <fullName evidence="1">NADH-quinone oxidoreductase subunit N</fullName>
        <ecNumber evidence="1">7.1.1.-</ecNumber>
    </recommendedName>
    <alternativeName>
        <fullName evidence="1">NADH dehydrogenase I subunit N</fullName>
    </alternativeName>
    <alternativeName>
        <fullName evidence="1">NDH-1 subunit N</fullName>
    </alternativeName>
</protein>
<proteinExistence type="inferred from homology"/>
<name>NUON_MOOTA</name>
<organism>
    <name type="scientific">Moorella thermoacetica (strain ATCC 39073 / JCM 9320)</name>
    <dbReference type="NCBI Taxonomy" id="264732"/>
    <lineage>
        <taxon>Bacteria</taxon>
        <taxon>Bacillati</taxon>
        <taxon>Bacillota</taxon>
        <taxon>Clostridia</taxon>
        <taxon>Moorellales</taxon>
        <taxon>Moorellaceae</taxon>
        <taxon>Moorella</taxon>
    </lineage>
</organism>
<dbReference type="EC" id="7.1.1.-" evidence="1"/>
<dbReference type="EMBL" id="CP000232">
    <property type="protein sequence ID" value="ABC19302.1"/>
    <property type="molecule type" value="Genomic_DNA"/>
</dbReference>
<dbReference type="RefSeq" id="YP_429845.1">
    <property type="nucleotide sequence ID" value="NC_007644.1"/>
</dbReference>
<dbReference type="SMR" id="Q2RJT7"/>
<dbReference type="STRING" id="264732.Moth_0987"/>
<dbReference type="EnsemblBacteria" id="ABC19302">
    <property type="protein sequence ID" value="ABC19302"/>
    <property type="gene ID" value="Moth_0987"/>
</dbReference>
<dbReference type="KEGG" id="mta:Moth_0987"/>
<dbReference type="PATRIC" id="fig|264732.11.peg.1061"/>
<dbReference type="eggNOG" id="COG1007">
    <property type="taxonomic scope" value="Bacteria"/>
</dbReference>
<dbReference type="HOGENOM" id="CLU_007100_1_5_9"/>
<dbReference type="OrthoDB" id="9807568at2"/>
<dbReference type="GO" id="GO:0005886">
    <property type="term" value="C:plasma membrane"/>
    <property type="evidence" value="ECO:0007669"/>
    <property type="project" value="UniProtKB-SubCell"/>
</dbReference>
<dbReference type="GO" id="GO:0008137">
    <property type="term" value="F:NADH dehydrogenase (ubiquinone) activity"/>
    <property type="evidence" value="ECO:0007669"/>
    <property type="project" value="InterPro"/>
</dbReference>
<dbReference type="GO" id="GO:0050136">
    <property type="term" value="F:NADH:ubiquinone reductase (non-electrogenic) activity"/>
    <property type="evidence" value="ECO:0007669"/>
    <property type="project" value="UniProtKB-UniRule"/>
</dbReference>
<dbReference type="GO" id="GO:0048038">
    <property type="term" value="F:quinone binding"/>
    <property type="evidence" value="ECO:0007669"/>
    <property type="project" value="UniProtKB-KW"/>
</dbReference>
<dbReference type="GO" id="GO:0042773">
    <property type="term" value="P:ATP synthesis coupled electron transport"/>
    <property type="evidence" value="ECO:0007669"/>
    <property type="project" value="InterPro"/>
</dbReference>
<dbReference type="HAMAP" id="MF_00445">
    <property type="entry name" value="NDH1_NuoN_1"/>
    <property type="match status" value="1"/>
</dbReference>
<dbReference type="InterPro" id="IPR010096">
    <property type="entry name" value="NADH-Q_OxRdtase_suN/2"/>
</dbReference>
<dbReference type="InterPro" id="IPR001750">
    <property type="entry name" value="ND/Mrp_TM"/>
</dbReference>
<dbReference type="NCBIfam" id="TIGR01770">
    <property type="entry name" value="NDH_I_N"/>
    <property type="match status" value="1"/>
</dbReference>
<dbReference type="PANTHER" id="PTHR22773">
    <property type="entry name" value="NADH DEHYDROGENASE"/>
    <property type="match status" value="1"/>
</dbReference>
<dbReference type="Pfam" id="PF00361">
    <property type="entry name" value="Proton_antipo_M"/>
    <property type="match status" value="1"/>
</dbReference>
<gene>
    <name evidence="1" type="primary">nuoN</name>
    <name type="ordered locus">Moth_0987</name>
</gene>
<comment type="function">
    <text evidence="1">NDH-1 shuttles electrons from NADH, via FMN and iron-sulfur (Fe-S) centers, to quinones in the respiratory chain. The immediate electron acceptor for the enzyme in this species is believed to be a menaquinone. Couples the redox reaction to proton translocation (for every two electrons transferred, four hydrogen ions are translocated across the cytoplasmic membrane), and thus conserves the redox energy in a proton gradient.</text>
</comment>
<comment type="catalytic activity">
    <reaction evidence="1">
        <text>a quinone + NADH + 5 H(+)(in) = a quinol + NAD(+) + 4 H(+)(out)</text>
        <dbReference type="Rhea" id="RHEA:57888"/>
        <dbReference type="ChEBI" id="CHEBI:15378"/>
        <dbReference type="ChEBI" id="CHEBI:24646"/>
        <dbReference type="ChEBI" id="CHEBI:57540"/>
        <dbReference type="ChEBI" id="CHEBI:57945"/>
        <dbReference type="ChEBI" id="CHEBI:132124"/>
    </reaction>
</comment>
<comment type="subunit">
    <text evidence="1">NDH-1 is composed of 14 different subunits. Subunits NuoA, H, J, K, L, M, N constitute the membrane sector of the complex.</text>
</comment>
<comment type="subcellular location">
    <subcellularLocation>
        <location evidence="1">Cell membrane</location>
        <topology evidence="1">Multi-pass membrane protein</topology>
    </subcellularLocation>
</comment>
<comment type="similarity">
    <text evidence="1">Belongs to the complex I subunit 2 family.</text>
</comment>
<evidence type="ECO:0000255" key="1">
    <source>
        <dbReference type="HAMAP-Rule" id="MF_00445"/>
    </source>
</evidence>